<reference evidence="6" key="1">
    <citation type="journal article" date="2008" name="J. Proteomics">
        <title>A proteomics approach to identify proteins differentially expressed in Douglas-fir seedlings infected by Phellinus sulphurascens.</title>
        <authorList>
            <person name="Islam M.A."/>
            <person name="Sturrock R.N."/>
            <person name="Ekramoddoullah A.K.M."/>
        </authorList>
    </citation>
    <scope>IDENTIFICATION BY MASS SPECTROMETRY</scope>
</reference>
<accession>P85930</accession>
<feature type="chain" id="PRO_0000397960" description="Nucleoside diphosphate kinase 2">
    <location>
        <begin position="1" status="less than"/>
        <end position="27" status="greater than"/>
    </location>
</feature>
<feature type="binding site" evidence="1">
    <location>
        <position position="3"/>
    </location>
    <ligand>
        <name>ATP</name>
        <dbReference type="ChEBI" id="CHEBI:30616"/>
    </ligand>
</feature>
<feature type="non-consecutive residues" evidence="5">
    <location>
        <begin position="18"/>
        <end position="19"/>
    </location>
</feature>
<feature type="non-terminal residue" evidence="5">
    <location>
        <position position="1"/>
    </location>
</feature>
<feature type="non-terminal residue" evidence="5">
    <location>
        <position position="27"/>
    </location>
</feature>
<name>NDK2_PSEMZ</name>
<keyword id="KW-0067">ATP-binding</keyword>
<keyword id="KW-0418">Kinase</keyword>
<keyword id="KW-0460">Magnesium</keyword>
<keyword id="KW-0479">Metal-binding</keyword>
<keyword id="KW-0546">Nucleotide metabolism</keyword>
<keyword id="KW-0547">Nucleotide-binding</keyword>
<keyword id="KW-0597">Phosphoprotein</keyword>
<keyword id="KW-0808">Transferase</keyword>
<protein>
    <recommendedName>
        <fullName evidence="2 5">Nucleoside diphosphate kinase 2</fullName>
        <ecNumber>2.7.4.6</ecNumber>
    </recommendedName>
    <alternativeName>
        <fullName evidence="2 5">Nucleoside diphosphate kinase II</fullName>
        <shortName evidence="2 5">NDK II</shortName>
        <shortName evidence="2 5">NDP kinase II</shortName>
        <shortName evidence="2 5">NDPK II</shortName>
    </alternativeName>
</protein>
<organism>
    <name type="scientific">Pseudotsuga menziesii</name>
    <name type="common">Douglas-fir</name>
    <name type="synonym">Abies menziesii</name>
    <dbReference type="NCBI Taxonomy" id="3357"/>
    <lineage>
        <taxon>Eukaryota</taxon>
        <taxon>Viridiplantae</taxon>
        <taxon>Streptophyta</taxon>
        <taxon>Embryophyta</taxon>
        <taxon>Tracheophyta</taxon>
        <taxon>Spermatophyta</taxon>
        <taxon>Pinopsida</taxon>
        <taxon>Pinidae</taxon>
        <taxon>Conifers I</taxon>
        <taxon>Pinales</taxon>
        <taxon>Pinaceae</taxon>
        <taxon>Pseudotsuga</taxon>
    </lineage>
</organism>
<sequence length="27" mass="2913">MIKPDGVQRGLVGEIISRGDFAIDIGR</sequence>
<proteinExistence type="evidence at protein level"/>
<dbReference type="EC" id="2.7.4.6"/>
<dbReference type="GO" id="GO:0005524">
    <property type="term" value="F:ATP binding"/>
    <property type="evidence" value="ECO:0007669"/>
    <property type="project" value="UniProtKB-KW"/>
</dbReference>
<dbReference type="GO" id="GO:0046872">
    <property type="term" value="F:metal ion binding"/>
    <property type="evidence" value="ECO:0007669"/>
    <property type="project" value="UniProtKB-KW"/>
</dbReference>
<dbReference type="GO" id="GO:0004550">
    <property type="term" value="F:nucleoside diphosphate kinase activity"/>
    <property type="evidence" value="ECO:0007669"/>
    <property type="project" value="UniProtKB-EC"/>
</dbReference>
<dbReference type="GO" id="GO:0009117">
    <property type="term" value="P:nucleotide metabolic process"/>
    <property type="evidence" value="ECO:0007669"/>
    <property type="project" value="UniProtKB-KW"/>
</dbReference>
<dbReference type="InterPro" id="IPR036850">
    <property type="entry name" value="NDK-like_dom_sf"/>
</dbReference>
<dbReference type="SUPFAM" id="SSF54919">
    <property type="entry name" value="Nucleoside diphosphate kinase, NDK"/>
    <property type="match status" value="1"/>
</dbReference>
<dbReference type="PROSITE" id="PS51374">
    <property type="entry name" value="NDPK_LIKE"/>
    <property type="match status" value="1"/>
</dbReference>
<evidence type="ECO:0000250" key="1">
    <source>
        <dbReference type="UniProtKB" id="P15531"/>
    </source>
</evidence>
<evidence type="ECO:0000250" key="2">
    <source>
        <dbReference type="UniProtKB" id="Q02254"/>
    </source>
</evidence>
<evidence type="ECO:0000255" key="3"/>
<evidence type="ECO:0000255" key="4">
    <source>
        <dbReference type="PROSITE-ProRule" id="PRU10030"/>
    </source>
</evidence>
<evidence type="ECO:0000303" key="5">
    <source>
    </source>
</evidence>
<evidence type="ECO:0000305" key="6"/>
<comment type="function">
    <text evidence="6">Major role in the synthesis of nucleoside triphosphates other than ATP. The ATP gamma phosphate is transferred to the NDP beta phosphate via a ping-pong mechanism, using a phosphorylated active-site intermediate.</text>
</comment>
<comment type="catalytic activity">
    <reaction evidence="4 6">
        <text>a 2'-deoxyribonucleoside 5'-diphosphate + ATP = a 2'-deoxyribonucleoside 5'-triphosphate + ADP</text>
        <dbReference type="Rhea" id="RHEA:44640"/>
        <dbReference type="ChEBI" id="CHEBI:30616"/>
        <dbReference type="ChEBI" id="CHEBI:61560"/>
        <dbReference type="ChEBI" id="CHEBI:73316"/>
        <dbReference type="ChEBI" id="CHEBI:456216"/>
        <dbReference type="EC" id="2.7.4.6"/>
    </reaction>
</comment>
<comment type="catalytic activity">
    <reaction evidence="4 6">
        <text>a ribonucleoside 5'-diphosphate + ATP = a ribonucleoside 5'-triphosphate + ADP</text>
        <dbReference type="Rhea" id="RHEA:18113"/>
        <dbReference type="ChEBI" id="CHEBI:30616"/>
        <dbReference type="ChEBI" id="CHEBI:57930"/>
        <dbReference type="ChEBI" id="CHEBI:61557"/>
        <dbReference type="ChEBI" id="CHEBI:456216"/>
        <dbReference type="EC" id="2.7.4.6"/>
    </reaction>
</comment>
<comment type="cofactor">
    <cofactor evidence="1">
        <name>Mg(2+)</name>
        <dbReference type="ChEBI" id="CHEBI:18420"/>
    </cofactor>
</comment>
<comment type="similarity">
    <text evidence="3">Belongs to the NDK family.</text>
</comment>